<accession>B7V7U5</accession>
<gene>
    <name evidence="1" type="primary">lpxB</name>
    <name type="ordered locus">PLES_13921</name>
</gene>
<evidence type="ECO:0000255" key="1">
    <source>
        <dbReference type="HAMAP-Rule" id="MF_00392"/>
    </source>
</evidence>
<reference key="1">
    <citation type="journal article" date="2009" name="Genome Res.">
        <title>Newly introduced genomic prophage islands are critical determinants of in vivo competitiveness in the Liverpool epidemic strain of Pseudomonas aeruginosa.</title>
        <authorList>
            <person name="Winstanley C."/>
            <person name="Langille M.G.I."/>
            <person name="Fothergill J.L."/>
            <person name="Kukavica-Ibrulj I."/>
            <person name="Paradis-Bleau C."/>
            <person name="Sanschagrin F."/>
            <person name="Thomson N.R."/>
            <person name="Winsor G.L."/>
            <person name="Quail M.A."/>
            <person name="Lennard N."/>
            <person name="Bignell A."/>
            <person name="Clarke L."/>
            <person name="Seeger K."/>
            <person name="Saunders D."/>
            <person name="Harris D."/>
            <person name="Parkhill J."/>
            <person name="Hancock R.E.W."/>
            <person name="Brinkman F.S.L."/>
            <person name="Levesque R.C."/>
        </authorList>
    </citation>
    <scope>NUCLEOTIDE SEQUENCE [LARGE SCALE GENOMIC DNA]</scope>
    <source>
        <strain>LESB58</strain>
    </source>
</reference>
<feature type="chain" id="PRO_1000123055" description="Lipid-A-disaccharide synthase">
    <location>
        <begin position="1"/>
        <end position="378"/>
    </location>
</feature>
<comment type="function">
    <text evidence="1">Condensation of UDP-2,3-diacylglucosamine and 2,3-diacylglucosamine-1-phosphate to form lipid A disaccharide, a precursor of lipid A, a phosphorylated glycolipid that anchors the lipopolysaccharide to the outer membrane of the cell.</text>
</comment>
<comment type="catalytic activity">
    <reaction evidence="1">
        <text>a lipid X + a UDP-2-N,3-O-bis[(3R)-3-hydroxyacyl]-alpha-D-glucosamine = a lipid A disaccharide + UDP + H(+)</text>
        <dbReference type="Rhea" id="RHEA:67828"/>
        <dbReference type="ChEBI" id="CHEBI:15378"/>
        <dbReference type="ChEBI" id="CHEBI:58223"/>
        <dbReference type="ChEBI" id="CHEBI:137748"/>
        <dbReference type="ChEBI" id="CHEBI:176338"/>
        <dbReference type="ChEBI" id="CHEBI:176343"/>
        <dbReference type="EC" id="2.4.1.182"/>
    </reaction>
</comment>
<comment type="pathway">
    <text evidence="1">Bacterial outer membrane biogenesis; LPS lipid A biosynthesis.</text>
</comment>
<comment type="similarity">
    <text evidence="1">Belongs to the LpxB family.</text>
</comment>
<keyword id="KW-0328">Glycosyltransferase</keyword>
<keyword id="KW-0441">Lipid A biosynthesis</keyword>
<keyword id="KW-0444">Lipid biosynthesis</keyword>
<keyword id="KW-0443">Lipid metabolism</keyword>
<keyword id="KW-0808">Transferase</keyword>
<name>LPXB_PSEA8</name>
<dbReference type="EC" id="2.4.1.182" evidence="1"/>
<dbReference type="EMBL" id="FM209186">
    <property type="protein sequence ID" value="CAW26120.1"/>
    <property type="molecule type" value="Genomic_DNA"/>
</dbReference>
<dbReference type="RefSeq" id="WP_003113865.1">
    <property type="nucleotide sequence ID" value="NC_011770.1"/>
</dbReference>
<dbReference type="SMR" id="B7V7U5"/>
<dbReference type="CAZy" id="GT19">
    <property type="family name" value="Glycosyltransferase Family 19"/>
</dbReference>
<dbReference type="KEGG" id="pag:PLES_13921"/>
<dbReference type="HOGENOM" id="CLU_036577_3_0_6"/>
<dbReference type="UniPathway" id="UPA00973"/>
<dbReference type="GO" id="GO:0016020">
    <property type="term" value="C:membrane"/>
    <property type="evidence" value="ECO:0007669"/>
    <property type="project" value="GOC"/>
</dbReference>
<dbReference type="GO" id="GO:0008915">
    <property type="term" value="F:lipid-A-disaccharide synthase activity"/>
    <property type="evidence" value="ECO:0007669"/>
    <property type="project" value="UniProtKB-UniRule"/>
</dbReference>
<dbReference type="GO" id="GO:0005543">
    <property type="term" value="F:phospholipid binding"/>
    <property type="evidence" value="ECO:0007669"/>
    <property type="project" value="TreeGrafter"/>
</dbReference>
<dbReference type="GO" id="GO:0009245">
    <property type="term" value="P:lipid A biosynthetic process"/>
    <property type="evidence" value="ECO:0007669"/>
    <property type="project" value="UniProtKB-UniRule"/>
</dbReference>
<dbReference type="FunFam" id="3.40.50.2000:FF:000245">
    <property type="entry name" value="Lipid-A-disaccharide synthase"/>
    <property type="match status" value="1"/>
</dbReference>
<dbReference type="Gene3D" id="3.40.50.2000">
    <property type="entry name" value="Glycogen Phosphorylase B"/>
    <property type="match status" value="1"/>
</dbReference>
<dbReference type="HAMAP" id="MF_00392">
    <property type="entry name" value="LpxB"/>
    <property type="match status" value="1"/>
</dbReference>
<dbReference type="InterPro" id="IPR003835">
    <property type="entry name" value="Glyco_trans_19"/>
</dbReference>
<dbReference type="NCBIfam" id="TIGR00215">
    <property type="entry name" value="lpxB"/>
    <property type="match status" value="1"/>
</dbReference>
<dbReference type="PANTHER" id="PTHR30372">
    <property type="entry name" value="LIPID-A-DISACCHARIDE SYNTHASE"/>
    <property type="match status" value="1"/>
</dbReference>
<dbReference type="PANTHER" id="PTHR30372:SF4">
    <property type="entry name" value="LIPID-A-DISACCHARIDE SYNTHASE, MITOCHONDRIAL-RELATED"/>
    <property type="match status" value="1"/>
</dbReference>
<dbReference type="Pfam" id="PF02684">
    <property type="entry name" value="LpxB"/>
    <property type="match status" value="1"/>
</dbReference>
<dbReference type="SUPFAM" id="SSF53756">
    <property type="entry name" value="UDP-Glycosyltransferase/glycogen phosphorylase"/>
    <property type="match status" value="1"/>
</dbReference>
<sequence length="378" mass="41294">MADGLRVALVAGEASGDILGSGLMQALRARHPDIEFIGVGGPRMEAEGLSSYFPMERLSVMGLVEVLGRLPELLRRRKRLIRTLIEARPDVMIGIDAPDFTLGVEHKLRQAGLRTVHYVSPSVWAWRQKRVLKIREACDLMLALFPFEARFYEEHGVPVRFVGHPLANTIPLQADRAAARARLGLPADGQVLALMPGSRGGEVGKLGALFLDTAQRLLVERPGLRFVLPCASAARREQIEQMLQGREPLPLTLLDGASHEALAACDAVLIASGTATLEALLYKRPMVVAYRVAGLTYRILKRLVKSPYISLPNLLAGRLLVPELIQDAATPQALAATLSPLLDDGSQQVEFFDAIHRALRQDASAQAAEAVLQLVERR</sequence>
<organism>
    <name type="scientific">Pseudomonas aeruginosa (strain LESB58)</name>
    <dbReference type="NCBI Taxonomy" id="557722"/>
    <lineage>
        <taxon>Bacteria</taxon>
        <taxon>Pseudomonadati</taxon>
        <taxon>Pseudomonadota</taxon>
        <taxon>Gammaproteobacteria</taxon>
        <taxon>Pseudomonadales</taxon>
        <taxon>Pseudomonadaceae</taxon>
        <taxon>Pseudomonas</taxon>
    </lineage>
</organism>
<proteinExistence type="inferred from homology"/>
<protein>
    <recommendedName>
        <fullName evidence="1">Lipid-A-disaccharide synthase</fullName>
        <ecNumber evidence="1">2.4.1.182</ecNumber>
    </recommendedName>
</protein>